<keyword id="KW-0131">Cell cycle</keyword>
<keyword id="KW-0132">Cell division</keyword>
<keyword id="KW-0195">Cyclin</keyword>
<keyword id="KW-1185">Reference proteome</keyword>
<sequence>MDSIMEPYVADLLADDITASMVELLPGDGGAAQMDVGVLDAYLRAIGALPAHPAAPGADLAAAAEVESMASNDDTNGVLYDWDTKVDVKVPCALLPPPPGFPPLPVPGLADEPVYAAPARHLPPPPGFPPLPVPGLADEPVYAAPARRLPPPPGFPPLPVPAKAEPVYAAPVDEGDAIRAFMQQLEWSEQYNGDNDAPAPDNSTASRPQLCAPYDDDIDANLRDMEKDAAQRPSPDYLDTVQGGQISAAARASLVAWMGRLTHRYELAAGTLHRAVSYFDRFLSVRALPSYTAHQLSLVAATAVYTAAKYEDQGTVFKLDAREIASYGEFASAQEVLAMEREMMAALGYRLGGPNAETFVEHFTRYSKGKEELRVQRLACHVADRSLESYGCLGYLPSMVAAAAISIARWTLNPPGALPWSSELQELTGYSSQDISSCILTVLNTQ</sequence>
<organism>
    <name type="scientific">Oryza sativa subsp. japonica</name>
    <name type="common">Rice</name>
    <dbReference type="NCBI Taxonomy" id="39947"/>
    <lineage>
        <taxon>Eukaryota</taxon>
        <taxon>Viridiplantae</taxon>
        <taxon>Streptophyta</taxon>
        <taxon>Embryophyta</taxon>
        <taxon>Tracheophyta</taxon>
        <taxon>Spermatophyta</taxon>
        <taxon>Magnoliopsida</taxon>
        <taxon>Liliopsida</taxon>
        <taxon>Poales</taxon>
        <taxon>Poaceae</taxon>
        <taxon>BOP clade</taxon>
        <taxon>Oryzoideae</taxon>
        <taxon>Oryzeae</taxon>
        <taxon>Oryzinae</taxon>
        <taxon>Oryza</taxon>
        <taxon>Oryza sativa</taxon>
    </lineage>
</organism>
<accession>Q6K8S0</accession>
<accession>B7F1J2</accession>
<protein>
    <recommendedName>
        <fullName>Cyclin-F2-2</fullName>
        <shortName>CycF2;2</shortName>
    </recommendedName>
</protein>
<gene>
    <name type="primary">CYCF2-2</name>
    <name type="ordered locus">Os02g0605000</name>
    <name type="ordered locus">LOC_Os02g39260</name>
    <name type="ORF">OJ1058_F07.10</name>
    <name type="ORF">OsJ_007220</name>
</gene>
<proteinExistence type="evidence at transcript level"/>
<name>CCF22_ORYSJ</name>
<dbReference type="EMBL" id="AP004111">
    <property type="protein sequence ID" value="BAD19322.1"/>
    <property type="molecule type" value="Genomic_DNA"/>
</dbReference>
<dbReference type="EMBL" id="AP008208">
    <property type="protein sequence ID" value="BAF09283.1"/>
    <property type="molecule type" value="Genomic_DNA"/>
</dbReference>
<dbReference type="EMBL" id="AP014958">
    <property type="protein sequence ID" value="BAS79653.1"/>
    <property type="molecule type" value="Genomic_DNA"/>
</dbReference>
<dbReference type="EMBL" id="CM000139">
    <property type="protein sequence ID" value="EAZ23737.1"/>
    <property type="molecule type" value="Genomic_DNA"/>
</dbReference>
<dbReference type="EMBL" id="AK108680">
    <property type="protein sequence ID" value="BAG98489.1"/>
    <property type="molecule type" value="mRNA"/>
</dbReference>
<dbReference type="RefSeq" id="XP_015625113.1">
    <property type="nucleotide sequence ID" value="XM_015769627.1"/>
</dbReference>
<dbReference type="SMR" id="Q6K8S0"/>
<dbReference type="FunCoup" id="Q6K8S0">
    <property type="interactions" value="93"/>
</dbReference>
<dbReference type="STRING" id="39947.Q6K8S0"/>
<dbReference type="PaxDb" id="39947-Q6K8S0"/>
<dbReference type="EnsemblPlants" id="Os02t0605000-01">
    <property type="protein sequence ID" value="Os02t0605000-01"/>
    <property type="gene ID" value="Os02g0605000"/>
</dbReference>
<dbReference type="Gramene" id="Os02t0605000-01">
    <property type="protein sequence ID" value="Os02t0605000-01"/>
    <property type="gene ID" value="Os02g0605000"/>
</dbReference>
<dbReference type="KEGG" id="dosa:Os02g0605000"/>
<dbReference type="eggNOG" id="KOG0654">
    <property type="taxonomic scope" value="Eukaryota"/>
</dbReference>
<dbReference type="HOGENOM" id="CLU_052910_3_1_1"/>
<dbReference type="InParanoid" id="Q6K8S0"/>
<dbReference type="OMA" id="ERPSPEY"/>
<dbReference type="OrthoDB" id="645822at2759"/>
<dbReference type="Proteomes" id="UP000000763">
    <property type="component" value="Chromosome 2"/>
</dbReference>
<dbReference type="Proteomes" id="UP000007752">
    <property type="component" value="Chromosome 2"/>
</dbReference>
<dbReference type="Proteomes" id="UP000059680">
    <property type="component" value="Chromosome 2"/>
</dbReference>
<dbReference type="GO" id="GO:0000307">
    <property type="term" value="C:cyclin-dependent protein kinase holoenzyme complex"/>
    <property type="evidence" value="ECO:0000318"/>
    <property type="project" value="GO_Central"/>
</dbReference>
<dbReference type="GO" id="GO:0005737">
    <property type="term" value="C:cytoplasm"/>
    <property type="evidence" value="ECO:0000318"/>
    <property type="project" value="GO_Central"/>
</dbReference>
<dbReference type="GO" id="GO:0005634">
    <property type="term" value="C:nucleus"/>
    <property type="evidence" value="ECO:0000318"/>
    <property type="project" value="GO_Central"/>
</dbReference>
<dbReference type="GO" id="GO:0016538">
    <property type="term" value="F:cyclin-dependent protein serine/threonine kinase regulator activity"/>
    <property type="evidence" value="ECO:0000318"/>
    <property type="project" value="GO_Central"/>
</dbReference>
<dbReference type="GO" id="GO:0051301">
    <property type="term" value="P:cell division"/>
    <property type="evidence" value="ECO:0007669"/>
    <property type="project" value="UniProtKB-KW"/>
</dbReference>
<dbReference type="GO" id="GO:0000082">
    <property type="term" value="P:G1/S transition of mitotic cell cycle"/>
    <property type="evidence" value="ECO:0000318"/>
    <property type="project" value="GO_Central"/>
</dbReference>
<dbReference type="FunFam" id="1.10.472.10:FF:000157">
    <property type="entry name" value="Putative cyclin-F2-1"/>
    <property type="match status" value="1"/>
</dbReference>
<dbReference type="Gene3D" id="1.10.472.10">
    <property type="entry name" value="Cyclin-like"/>
    <property type="match status" value="2"/>
</dbReference>
<dbReference type="InterPro" id="IPR039361">
    <property type="entry name" value="Cyclin"/>
</dbReference>
<dbReference type="InterPro" id="IPR013763">
    <property type="entry name" value="Cyclin-like_dom"/>
</dbReference>
<dbReference type="InterPro" id="IPR036915">
    <property type="entry name" value="Cyclin-like_sf"/>
</dbReference>
<dbReference type="InterPro" id="IPR004367">
    <property type="entry name" value="Cyclin_C-dom"/>
</dbReference>
<dbReference type="InterPro" id="IPR006671">
    <property type="entry name" value="Cyclin_N"/>
</dbReference>
<dbReference type="InterPro" id="IPR048258">
    <property type="entry name" value="Cyclins_cyclin-box"/>
</dbReference>
<dbReference type="PANTHER" id="PTHR10177">
    <property type="entry name" value="CYCLINS"/>
    <property type="match status" value="1"/>
</dbReference>
<dbReference type="Pfam" id="PF02984">
    <property type="entry name" value="Cyclin_C"/>
    <property type="match status" value="1"/>
</dbReference>
<dbReference type="Pfam" id="PF00134">
    <property type="entry name" value="Cyclin_N"/>
    <property type="match status" value="1"/>
</dbReference>
<dbReference type="SMART" id="SM00385">
    <property type="entry name" value="CYCLIN"/>
    <property type="match status" value="2"/>
</dbReference>
<dbReference type="SMART" id="SM01332">
    <property type="entry name" value="Cyclin_C"/>
    <property type="match status" value="1"/>
</dbReference>
<dbReference type="SUPFAM" id="SSF47954">
    <property type="entry name" value="Cyclin-like"/>
    <property type="match status" value="2"/>
</dbReference>
<dbReference type="PROSITE" id="PS00292">
    <property type="entry name" value="CYCLINS"/>
    <property type="match status" value="1"/>
</dbReference>
<comment type="similarity">
    <text evidence="2">Belongs to the cyclin family. Cyclin F subfamily.</text>
</comment>
<feature type="chain" id="PRO_0000287046" description="Cyclin-F2-2">
    <location>
        <begin position="1"/>
        <end position="446"/>
    </location>
</feature>
<feature type="region of interest" description="Disordered" evidence="1">
    <location>
        <begin position="191"/>
        <end position="216"/>
    </location>
</feature>
<evidence type="ECO:0000256" key="1">
    <source>
        <dbReference type="SAM" id="MobiDB-lite"/>
    </source>
</evidence>
<evidence type="ECO:0000305" key="2"/>
<reference key="1">
    <citation type="journal article" date="2005" name="Nature">
        <title>The map-based sequence of the rice genome.</title>
        <authorList>
            <consortium name="International rice genome sequencing project (IRGSP)"/>
        </authorList>
    </citation>
    <scope>NUCLEOTIDE SEQUENCE [LARGE SCALE GENOMIC DNA]</scope>
    <source>
        <strain>cv. Nipponbare</strain>
    </source>
</reference>
<reference key="2">
    <citation type="journal article" date="2008" name="Nucleic Acids Res.">
        <title>The rice annotation project database (RAP-DB): 2008 update.</title>
        <authorList>
            <consortium name="The rice annotation project (RAP)"/>
        </authorList>
    </citation>
    <scope>GENOME REANNOTATION</scope>
    <source>
        <strain>cv. Nipponbare</strain>
    </source>
</reference>
<reference key="3">
    <citation type="journal article" date="2013" name="Rice">
        <title>Improvement of the Oryza sativa Nipponbare reference genome using next generation sequence and optical map data.</title>
        <authorList>
            <person name="Kawahara Y."/>
            <person name="de la Bastide M."/>
            <person name="Hamilton J.P."/>
            <person name="Kanamori H."/>
            <person name="McCombie W.R."/>
            <person name="Ouyang S."/>
            <person name="Schwartz D.C."/>
            <person name="Tanaka T."/>
            <person name="Wu J."/>
            <person name="Zhou S."/>
            <person name="Childs K.L."/>
            <person name="Davidson R.M."/>
            <person name="Lin H."/>
            <person name="Quesada-Ocampo L."/>
            <person name="Vaillancourt B."/>
            <person name="Sakai H."/>
            <person name="Lee S.S."/>
            <person name="Kim J."/>
            <person name="Numa H."/>
            <person name="Itoh T."/>
            <person name="Buell C.R."/>
            <person name="Matsumoto T."/>
        </authorList>
    </citation>
    <scope>GENOME REANNOTATION</scope>
    <source>
        <strain>cv. Nipponbare</strain>
    </source>
</reference>
<reference key="4">
    <citation type="journal article" date="2005" name="PLoS Biol.">
        <title>The genomes of Oryza sativa: a history of duplications.</title>
        <authorList>
            <person name="Yu J."/>
            <person name="Wang J."/>
            <person name="Lin W."/>
            <person name="Li S."/>
            <person name="Li H."/>
            <person name="Zhou J."/>
            <person name="Ni P."/>
            <person name="Dong W."/>
            <person name="Hu S."/>
            <person name="Zeng C."/>
            <person name="Zhang J."/>
            <person name="Zhang Y."/>
            <person name="Li R."/>
            <person name="Xu Z."/>
            <person name="Li S."/>
            <person name="Li X."/>
            <person name="Zheng H."/>
            <person name="Cong L."/>
            <person name="Lin L."/>
            <person name="Yin J."/>
            <person name="Geng J."/>
            <person name="Li G."/>
            <person name="Shi J."/>
            <person name="Liu J."/>
            <person name="Lv H."/>
            <person name="Li J."/>
            <person name="Wang J."/>
            <person name="Deng Y."/>
            <person name="Ran L."/>
            <person name="Shi X."/>
            <person name="Wang X."/>
            <person name="Wu Q."/>
            <person name="Li C."/>
            <person name="Ren X."/>
            <person name="Wang J."/>
            <person name="Wang X."/>
            <person name="Li D."/>
            <person name="Liu D."/>
            <person name="Zhang X."/>
            <person name="Ji Z."/>
            <person name="Zhao W."/>
            <person name="Sun Y."/>
            <person name="Zhang Z."/>
            <person name="Bao J."/>
            <person name="Han Y."/>
            <person name="Dong L."/>
            <person name="Ji J."/>
            <person name="Chen P."/>
            <person name="Wu S."/>
            <person name="Liu J."/>
            <person name="Xiao Y."/>
            <person name="Bu D."/>
            <person name="Tan J."/>
            <person name="Yang L."/>
            <person name="Ye C."/>
            <person name="Zhang J."/>
            <person name="Xu J."/>
            <person name="Zhou Y."/>
            <person name="Yu Y."/>
            <person name="Zhang B."/>
            <person name="Zhuang S."/>
            <person name="Wei H."/>
            <person name="Liu B."/>
            <person name="Lei M."/>
            <person name="Yu H."/>
            <person name="Li Y."/>
            <person name="Xu H."/>
            <person name="Wei S."/>
            <person name="He X."/>
            <person name="Fang L."/>
            <person name="Zhang Z."/>
            <person name="Zhang Y."/>
            <person name="Huang X."/>
            <person name="Su Z."/>
            <person name="Tong W."/>
            <person name="Li J."/>
            <person name="Tong Z."/>
            <person name="Li S."/>
            <person name="Ye J."/>
            <person name="Wang L."/>
            <person name="Fang L."/>
            <person name="Lei T."/>
            <person name="Chen C.-S."/>
            <person name="Chen H.-C."/>
            <person name="Xu Z."/>
            <person name="Li H."/>
            <person name="Huang H."/>
            <person name="Zhang F."/>
            <person name="Xu H."/>
            <person name="Li N."/>
            <person name="Zhao C."/>
            <person name="Li S."/>
            <person name="Dong L."/>
            <person name="Huang Y."/>
            <person name="Li L."/>
            <person name="Xi Y."/>
            <person name="Qi Q."/>
            <person name="Li W."/>
            <person name="Zhang B."/>
            <person name="Hu W."/>
            <person name="Zhang Y."/>
            <person name="Tian X."/>
            <person name="Jiao Y."/>
            <person name="Liang X."/>
            <person name="Jin J."/>
            <person name="Gao L."/>
            <person name="Zheng W."/>
            <person name="Hao B."/>
            <person name="Liu S.-M."/>
            <person name="Wang W."/>
            <person name="Yuan L."/>
            <person name="Cao M."/>
            <person name="McDermott J."/>
            <person name="Samudrala R."/>
            <person name="Wang J."/>
            <person name="Wong G.K.-S."/>
            <person name="Yang H."/>
        </authorList>
    </citation>
    <scope>NUCLEOTIDE SEQUENCE [LARGE SCALE GENOMIC DNA]</scope>
    <source>
        <strain>cv. Nipponbare</strain>
    </source>
</reference>
<reference key="5">
    <citation type="journal article" date="2003" name="Science">
        <title>Collection, mapping, and annotation of over 28,000 cDNA clones from japonica rice.</title>
        <authorList>
            <consortium name="The rice full-length cDNA consortium"/>
        </authorList>
    </citation>
    <scope>NUCLEOTIDE SEQUENCE [LARGE SCALE MRNA]</scope>
    <source>
        <strain>cv. Nipponbare</strain>
    </source>
</reference>
<reference key="6">
    <citation type="journal article" date="2006" name="Mol. Genet. Genomics">
        <title>Genome-wide analysis of cyclin family in rice (Oryza sativa L.).</title>
        <authorList>
            <person name="La H."/>
            <person name="Li J."/>
            <person name="Ji Z."/>
            <person name="Cheng Y."/>
            <person name="Li X."/>
            <person name="Jiang S."/>
            <person name="Venkatesh P.N."/>
            <person name="Ramachandran S."/>
        </authorList>
    </citation>
    <scope>GENE FAMILY</scope>
    <scope>NOMENCLATURE</scope>
</reference>